<feature type="chain" id="PRO_0000117809" description="NADH-ubiquinone oxidoreductase chain 3">
    <location>
        <begin position="1"/>
        <end position="137"/>
    </location>
</feature>
<feature type="transmembrane region" description="Helical" evidence="2">
    <location>
        <begin position="6"/>
        <end position="26"/>
    </location>
</feature>
<feature type="transmembrane region" description="Helical" evidence="2">
    <location>
        <begin position="57"/>
        <end position="77"/>
    </location>
</feature>
<feature type="transmembrane region" description="Helical" evidence="2">
    <location>
        <begin position="86"/>
        <end position="106"/>
    </location>
</feature>
<proteinExistence type="inferred from homology"/>
<sequence>MSSMTLFILFVSIIALLFLFINLIFAPHNPYQEKYSIFECGFHSFLGQNRTQFGVKFFIFALVYLLLDLEILLTFPFAVSEYVNNIYGLIILLGFITIITIGFVYELGKSALKIDSRQVITMTRFNYSSTIEYLGKI</sequence>
<organism>
    <name type="scientific">Podospora anserina (strain S / ATCC MYA-4624 / DSM 980 / FGSC 10383)</name>
    <name type="common">Pleurage anserina</name>
    <dbReference type="NCBI Taxonomy" id="515849"/>
    <lineage>
        <taxon>Eukaryota</taxon>
        <taxon>Fungi</taxon>
        <taxon>Dikarya</taxon>
        <taxon>Ascomycota</taxon>
        <taxon>Pezizomycotina</taxon>
        <taxon>Sordariomycetes</taxon>
        <taxon>Sordariomycetidae</taxon>
        <taxon>Sordariales</taxon>
        <taxon>Podosporaceae</taxon>
        <taxon>Podospora</taxon>
        <taxon>Podospora anserina</taxon>
    </lineage>
</organism>
<gene>
    <name type="primary">ND3</name>
</gene>
<dbReference type="EC" id="7.1.1.2"/>
<dbReference type="EMBL" id="X55026">
    <property type="protein sequence ID" value="CAA38766.1"/>
    <property type="molecule type" value="Genomic_DNA"/>
</dbReference>
<dbReference type="EMBL" id="X14485">
    <property type="protein sequence ID" value="CAA32647.1"/>
    <property type="molecule type" value="Genomic_DNA"/>
</dbReference>
<dbReference type="PIR" id="S02155">
    <property type="entry name" value="S02155"/>
</dbReference>
<dbReference type="SMR" id="P15580"/>
<dbReference type="STRING" id="515849.P15580"/>
<dbReference type="KEGG" id="pan:PoanfMp05"/>
<dbReference type="InParanoid" id="P15580"/>
<dbReference type="Proteomes" id="UP000001197">
    <property type="component" value="Mitochondrion"/>
</dbReference>
<dbReference type="GO" id="GO:0031966">
    <property type="term" value="C:mitochondrial membrane"/>
    <property type="evidence" value="ECO:0007669"/>
    <property type="project" value="UniProtKB-SubCell"/>
</dbReference>
<dbReference type="GO" id="GO:0030964">
    <property type="term" value="C:NADH dehydrogenase complex"/>
    <property type="evidence" value="ECO:0007669"/>
    <property type="project" value="TreeGrafter"/>
</dbReference>
<dbReference type="GO" id="GO:0008137">
    <property type="term" value="F:NADH dehydrogenase (ubiquinone) activity"/>
    <property type="evidence" value="ECO:0007669"/>
    <property type="project" value="UniProtKB-EC"/>
</dbReference>
<dbReference type="Gene3D" id="1.20.58.1610">
    <property type="entry name" value="NADH:ubiquinone/plastoquinone oxidoreductase, chain 3"/>
    <property type="match status" value="1"/>
</dbReference>
<dbReference type="InterPro" id="IPR000440">
    <property type="entry name" value="NADH_UbQ/plastoQ_OxRdtase_su3"/>
</dbReference>
<dbReference type="InterPro" id="IPR038430">
    <property type="entry name" value="NDAH_ubi_oxred_su3_sf"/>
</dbReference>
<dbReference type="PANTHER" id="PTHR11058">
    <property type="entry name" value="NADH-UBIQUINONE OXIDOREDUCTASE CHAIN 3"/>
    <property type="match status" value="1"/>
</dbReference>
<dbReference type="PANTHER" id="PTHR11058:SF9">
    <property type="entry name" value="NADH-UBIQUINONE OXIDOREDUCTASE CHAIN 3"/>
    <property type="match status" value="1"/>
</dbReference>
<dbReference type="Pfam" id="PF00507">
    <property type="entry name" value="Oxidored_q4"/>
    <property type="match status" value="1"/>
</dbReference>
<keyword id="KW-0249">Electron transport</keyword>
<keyword id="KW-0472">Membrane</keyword>
<keyword id="KW-0496">Mitochondrion</keyword>
<keyword id="KW-0520">NAD</keyword>
<keyword id="KW-1185">Reference proteome</keyword>
<keyword id="KW-0679">Respiratory chain</keyword>
<keyword id="KW-1278">Translocase</keyword>
<keyword id="KW-0812">Transmembrane</keyword>
<keyword id="KW-1133">Transmembrane helix</keyword>
<keyword id="KW-0813">Transport</keyword>
<keyword id="KW-0830">Ubiquinone</keyword>
<geneLocation type="mitochondrion"/>
<evidence type="ECO:0000250" key="1"/>
<evidence type="ECO:0000255" key="2"/>
<evidence type="ECO:0000305" key="3"/>
<reference key="1">
    <citation type="journal article" date="1988" name="J. Mol. Biol.">
        <title>Sequence analysis of mitochondrial DNA from Podospora anserina. Pervasiveness of a class I intron in three separate genes.</title>
        <authorList>
            <person name="Cummings D.J."/>
            <person name="Domenico J.M."/>
        </authorList>
    </citation>
    <scope>NUCLEOTIDE SEQUENCE [GENOMIC DNA]</scope>
    <source>
        <strain>A</strain>
        <strain>s</strain>
    </source>
</reference>
<reference key="2">
    <citation type="journal article" date="1990" name="Curr. Genet.">
        <title>The complete DNA sequence of the mitochondrial genome of Podospora anserina.</title>
        <authorList>
            <person name="Cummings D.J."/>
            <person name="McNally K.L."/>
            <person name="Domenico J.M."/>
            <person name="Matsuura E.T."/>
        </authorList>
    </citation>
    <scope>NUCLEOTIDE SEQUENCE [LARGE SCALE GENOMIC DNA]</scope>
    <source>
        <strain>s</strain>
    </source>
</reference>
<protein>
    <recommendedName>
        <fullName>NADH-ubiquinone oxidoreductase chain 3</fullName>
        <ecNumber>7.1.1.2</ecNumber>
    </recommendedName>
    <alternativeName>
        <fullName>NADH dehydrogenase subunit 3</fullName>
    </alternativeName>
</protein>
<name>NU3M_PODAN</name>
<accession>P15580</accession>
<comment type="function">
    <text evidence="1">Core subunit of the mitochondrial membrane respiratory chain NADH dehydrogenase (Complex I) that is believed to belong to the minimal assembly required for catalysis. Complex I functions in the transfer of electrons from NADH to the respiratory chain. The immediate electron acceptor for the enzyme is believed to be ubiquinone (By similarity).</text>
</comment>
<comment type="catalytic activity">
    <reaction>
        <text>a ubiquinone + NADH + 5 H(+)(in) = a ubiquinol + NAD(+) + 4 H(+)(out)</text>
        <dbReference type="Rhea" id="RHEA:29091"/>
        <dbReference type="Rhea" id="RHEA-COMP:9565"/>
        <dbReference type="Rhea" id="RHEA-COMP:9566"/>
        <dbReference type="ChEBI" id="CHEBI:15378"/>
        <dbReference type="ChEBI" id="CHEBI:16389"/>
        <dbReference type="ChEBI" id="CHEBI:17976"/>
        <dbReference type="ChEBI" id="CHEBI:57540"/>
        <dbReference type="ChEBI" id="CHEBI:57945"/>
        <dbReference type="EC" id="7.1.1.2"/>
    </reaction>
</comment>
<comment type="subcellular location">
    <subcellularLocation>
        <location evidence="1">Mitochondrion membrane</location>
        <topology evidence="1">Multi-pass membrane protein</topology>
    </subcellularLocation>
</comment>
<comment type="similarity">
    <text evidence="3">Belongs to the complex I subunit 3 family.</text>
</comment>